<name>FTSB_STRMK</name>
<reference key="1">
    <citation type="journal article" date="2008" name="Genome Biol.">
        <title>The complete genome, comparative and functional analysis of Stenotrophomonas maltophilia reveals an organism heavily shielded by drug resistance determinants.</title>
        <authorList>
            <person name="Crossman L.C."/>
            <person name="Gould V.C."/>
            <person name="Dow J.M."/>
            <person name="Vernikos G.S."/>
            <person name="Okazaki A."/>
            <person name="Sebaihia M."/>
            <person name="Saunders D."/>
            <person name="Arrowsmith C."/>
            <person name="Carver T."/>
            <person name="Peters N."/>
            <person name="Adlem E."/>
            <person name="Kerhornou A."/>
            <person name="Lord A."/>
            <person name="Murphy L."/>
            <person name="Seeger K."/>
            <person name="Squares R."/>
            <person name="Rutter S."/>
            <person name="Quail M.A."/>
            <person name="Rajandream M.A."/>
            <person name="Harris D."/>
            <person name="Churcher C."/>
            <person name="Bentley S.D."/>
            <person name="Parkhill J."/>
            <person name="Thomson N.R."/>
            <person name="Avison M.B."/>
        </authorList>
    </citation>
    <scope>NUCLEOTIDE SEQUENCE [LARGE SCALE GENOMIC DNA]</scope>
    <source>
        <strain>K279a</strain>
    </source>
</reference>
<keyword id="KW-0131">Cell cycle</keyword>
<keyword id="KW-0132">Cell division</keyword>
<keyword id="KW-0997">Cell inner membrane</keyword>
<keyword id="KW-1003">Cell membrane</keyword>
<keyword id="KW-0175">Coiled coil</keyword>
<keyword id="KW-0472">Membrane</keyword>
<keyword id="KW-1185">Reference proteome</keyword>
<keyword id="KW-0812">Transmembrane</keyword>
<keyword id="KW-1133">Transmembrane helix</keyword>
<dbReference type="EMBL" id="AM743169">
    <property type="protein sequence ID" value="CAQ45240.1"/>
    <property type="molecule type" value="Genomic_DNA"/>
</dbReference>
<dbReference type="RefSeq" id="WP_005412924.1">
    <property type="nucleotide sequence ID" value="NC_010943.1"/>
</dbReference>
<dbReference type="SMR" id="B2FK89"/>
<dbReference type="EnsemblBacteria" id="CAQ45240">
    <property type="protein sequence ID" value="CAQ45240"/>
    <property type="gene ID" value="Smlt1716"/>
</dbReference>
<dbReference type="GeneID" id="93832884"/>
<dbReference type="KEGG" id="sml:Smlt1716"/>
<dbReference type="eggNOG" id="COG2919">
    <property type="taxonomic scope" value="Bacteria"/>
</dbReference>
<dbReference type="HOGENOM" id="CLU_134863_5_0_6"/>
<dbReference type="Proteomes" id="UP000008840">
    <property type="component" value="Chromosome"/>
</dbReference>
<dbReference type="GO" id="GO:0032153">
    <property type="term" value="C:cell division site"/>
    <property type="evidence" value="ECO:0007669"/>
    <property type="project" value="UniProtKB-UniRule"/>
</dbReference>
<dbReference type="GO" id="GO:0030428">
    <property type="term" value="C:cell septum"/>
    <property type="evidence" value="ECO:0007669"/>
    <property type="project" value="TreeGrafter"/>
</dbReference>
<dbReference type="GO" id="GO:0005886">
    <property type="term" value="C:plasma membrane"/>
    <property type="evidence" value="ECO:0007669"/>
    <property type="project" value="UniProtKB-SubCell"/>
</dbReference>
<dbReference type="GO" id="GO:0043093">
    <property type="term" value="P:FtsZ-dependent cytokinesis"/>
    <property type="evidence" value="ECO:0007669"/>
    <property type="project" value="UniProtKB-UniRule"/>
</dbReference>
<dbReference type="HAMAP" id="MF_00599">
    <property type="entry name" value="FtsB"/>
    <property type="match status" value="1"/>
</dbReference>
<dbReference type="InterPro" id="IPR023081">
    <property type="entry name" value="Cell_div_FtsB"/>
</dbReference>
<dbReference type="InterPro" id="IPR007060">
    <property type="entry name" value="FtsL/DivIC"/>
</dbReference>
<dbReference type="NCBIfam" id="NF002058">
    <property type="entry name" value="PRK00888.1"/>
    <property type="match status" value="1"/>
</dbReference>
<dbReference type="PANTHER" id="PTHR37485">
    <property type="entry name" value="CELL DIVISION PROTEIN FTSB"/>
    <property type="match status" value="1"/>
</dbReference>
<dbReference type="PANTHER" id="PTHR37485:SF1">
    <property type="entry name" value="CELL DIVISION PROTEIN FTSB"/>
    <property type="match status" value="1"/>
</dbReference>
<dbReference type="Pfam" id="PF04977">
    <property type="entry name" value="DivIC"/>
    <property type="match status" value="1"/>
</dbReference>
<evidence type="ECO:0000255" key="1">
    <source>
        <dbReference type="HAMAP-Rule" id="MF_00599"/>
    </source>
</evidence>
<accession>B2FK89</accession>
<proteinExistence type="inferred from homology"/>
<gene>
    <name evidence="1" type="primary">ftsB</name>
    <name type="ordered locus">Smlt1716</name>
</gene>
<sequence length="117" mass="13100">MRDWRWMLLVLALLLGWLQYRFWFGPGNSGEVMMLEAQVANQERDNEGLQQRNDALAAEVKDLKEGQSAIEERARSELGMIKPGEKFYRVVEDAPVHPAQPAAGVSAQVGDHPADVP</sequence>
<organism>
    <name type="scientific">Stenotrophomonas maltophilia (strain K279a)</name>
    <dbReference type="NCBI Taxonomy" id="522373"/>
    <lineage>
        <taxon>Bacteria</taxon>
        <taxon>Pseudomonadati</taxon>
        <taxon>Pseudomonadota</taxon>
        <taxon>Gammaproteobacteria</taxon>
        <taxon>Lysobacterales</taxon>
        <taxon>Lysobacteraceae</taxon>
        <taxon>Stenotrophomonas</taxon>
        <taxon>Stenotrophomonas maltophilia group</taxon>
    </lineage>
</organism>
<comment type="function">
    <text evidence="1">Essential cell division protein. May link together the upstream cell division proteins, which are predominantly cytoplasmic, with the downstream cell division proteins, which are predominantly periplasmic.</text>
</comment>
<comment type="subunit">
    <text evidence="1">Part of a complex composed of FtsB, FtsL and FtsQ.</text>
</comment>
<comment type="subcellular location">
    <subcellularLocation>
        <location evidence="1">Cell inner membrane</location>
        <topology evidence="1">Single-pass type II membrane protein</topology>
    </subcellularLocation>
    <text evidence="1">Localizes to the division septum.</text>
</comment>
<comment type="similarity">
    <text evidence="1">Belongs to the FtsB family.</text>
</comment>
<protein>
    <recommendedName>
        <fullName evidence="1">Cell division protein FtsB</fullName>
    </recommendedName>
</protein>
<feature type="chain" id="PRO_1000129947" description="Cell division protein FtsB">
    <location>
        <begin position="1"/>
        <end position="117"/>
    </location>
</feature>
<feature type="topological domain" description="Cytoplasmic" evidence="1">
    <location>
        <begin position="1"/>
        <end position="6"/>
    </location>
</feature>
<feature type="transmembrane region" description="Helical" evidence="1">
    <location>
        <begin position="7"/>
        <end position="24"/>
    </location>
</feature>
<feature type="topological domain" description="Periplasmic" evidence="1">
    <location>
        <begin position="25"/>
        <end position="117"/>
    </location>
</feature>
<feature type="coiled-coil region" evidence="1">
    <location>
        <begin position="29"/>
        <end position="69"/>
    </location>
</feature>